<reference key="1">
    <citation type="journal article" date="2002" name="Nature">
        <title>The genome sequence of Schizosaccharomyces pombe.</title>
        <authorList>
            <person name="Wood V."/>
            <person name="Gwilliam R."/>
            <person name="Rajandream M.A."/>
            <person name="Lyne M.H."/>
            <person name="Lyne R."/>
            <person name="Stewart A."/>
            <person name="Sgouros J.G."/>
            <person name="Peat N."/>
            <person name="Hayles J."/>
            <person name="Baker S.G."/>
            <person name="Basham D."/>
            <person name="Bowman S."/>
            <person name="Brooks K."/>
            <person name="Brown D."/>
            <person name="Brown S."/>
            <person name="Chillingworth T."/>
            <person name="Churcher C.M."/>
            <person name="Collins M."/>
            <person name="Connor R."/>
            <person name="Cronin A."/>
            <person name="Davis P."/>
            <person name="Feltwell T."/>
            <person name="Fraser A."/>
            <person name="Gentles S."/>
            <person name="Goble A."/>
            <person name="Hamlin N."/>
            <person name="Harris D.E."/>
            <person name="Hidalgo J."/>
            <person name="Hodgson G."/>
            <person name="Holroyd S."/>
            <person name="Hornsby T."/>
            <person name="Howarth S."/>
            <person name="Huckle E.J."/>
            <person name="Hunt S."/>
            <person name="Jagels K."/>
            <person name="James K.D."/>
            <person name="Jones L."/>
            <person name="Jones M."/>
            <person name="Leather S."/>
            <person name="McDonald S."/>
            <person name="McLean J."/>
            <person name="Mooney P."/>
            <person name="Moule S."/>
            <person name="Mungall K.L."/>
            <person name="Murphy L.D."/>
            <person name="Niblett D."/>
            <person name="Odell C."/>
            <person name="Oliver K."/>
            <person name="O'Neil S."/>
            <person name="Pearson D."/>
            <person name="Quail M.A."/>
            <person name="Rabbinowitsch E."/>
            <person name="Rutherford K.M."/>
            <person name="Rutter S."/>
            <person name="Saunders D."/>
            <person name="Seeger K."/>
            <person name="Sharp S."/>
            <person name="Skelton J."/>
            <person name="Simmonds M.N."/>
            <person name="Squares R."/>
            <person name="Squares S."/>
            <person name="Stevens K."/>
            <person name="Taylor K."/>
            <person name="Taylor R.G."/>
            <person name="Tivey A."/>
            <person name="Walsh S.V."/>
            <person name="Warren T."/>
            <person name="Whitehead S."/>
            <person name="Woodward J.R."/>
            <person name="Volckaert G."/>
            <person name="Aert R."/>
            <person name="Robben J."/>
            <person name="Grymonprez B."/>
            <person name="Weltjens I."/>
            <person name="Vanstreels E."/>
            <person name="Rieger M."/>
            <person name="Schaefer M."/>
            <person name="Mueller-Auer S."/>
            <person name="Gabel C."/>
            <person name="Fuchs M."/>
            <person name="Duesterhoeft A."/>
            <person name="Fritzc C."/>
            <person name="Holzer E."/>
            <person name="Moestl D."/>
            <person name="Hilbert H."/>
            <person name="Borzym K."/>
            <person name="Langer I."/>
            <person name="Beck A."/>
            <person name="Lehrach H."/>
            <person name="Reinhardt R."/>
            <person name="Pohl T.M."/>
            <person name="Eger P."/>
            <person name="Zimmermann W."/>
            <person name="Wedler H."/>
            <person name="Wambutt R."/>
            <person name="Purnelle B."/>
            <person name="Goffeau A."/>
            <person name="Cadieu E."/>
            <person name="Dreano S."/>
            <person name="Gloux S."/>
            <person name="Lelaure V."/>
            <person name="Mottier S."/>
            <person name="Galibert F."/>
            <person name="Aves S.J."/>
            <person name="Xiang Z."/>
            <person name="Hunt C."/>
            <person name="Moore K."/>
            <person name="Hurst S.M."/>
            <person name="Lucas M."/>
            <person name="Rochet M."/>
            <person name="Gaillardin C."/>
            <person name="Tallada V.A."/>
            <person name="Garzon A."/>
            <person name="Thode G."/>
            <person name="Daga R.R."/>
            <person name="Cruzado L."/>
            <person name="Jimenez J."/>
            <person name="Sanchez M."/>
            <person name="del Rey F."/>
            <person name="Benito J."/>
            <person name="Dominguez A."/>
            <person name="Revuelta J.L."/>
            <person name="Moreno S."/>
            <person name="Armstrong J."/>
            <person name="Forsburg S.L."/>
            <person name="Cerutti L."/>
            <person name="Lowe T."/>
            <person name="McCombie W.R."/>
            <person name="Paulsen I."/>
            <person name="Potashkin J."/>
            <person name="Shpakovski G.V."/>
            <person name="Ussery D."/>
            <person name="Barrell B.G."/>
            <person name="Nurse P."/>
        </authorList>
    </citation>
    <scope>NUCLEOTIDE SEQUENCE [LARGE SCALE GENOMIC DNA]</scope>
    <source>
        <strain>972 / ATCC 24843</strain>
    </source>
</reference>
<reference key="2">
    <citation type="journal article" date="2006" name="Nat. Biotechnol.">
        <title>ORFeome cloning and global analysis of protein localization in the fission yeast Schizosaccharomyces pombe.</title>
        <authorList>
            <person name="Matsuyama A."/>
            <person name="Arai R."/>
            <person name="Yashiroda Y."/>
            <person name="Shirai A."/>
            <person name="Kamata A."/>
            <person name="Sekido S."/>
            <person name="Kobayashi Y."/>
            <person name="Hashimoto A."/>
            <person name="Hamamoto M."/>
            <person name="Hiraoka Y."/>
            <person name="Horinouchi S."/>
            <person name="Yoshida M."/>
        </authorList>
    </citation>
    <scope>SUBCELLULAR LOCATION [LARGE SCALE ANALYSIS]</scope>
</reference>
<reference key="3">
    <citation type="journal article" date="2008" name="J. Proteome Res.">
        <title>Phosphoproteome analysis of fission yeast.</title>
        <authorList>
            <person name="Wilson-Grady J.T."/>
            <person name="Villen J."/>
            <person name="Gygi S.P."/>
        </authorList>
    </citation>
    <scope>PHOSPHORYLATION [LARGE SCALE ANALYSIS] AT THR-123; THR-125; SER-235; SER-241 AND SER-246</scope>
    <scope>IDENTIFICATION BY MASS SPECTROMETRY</scope>
</reference>
<comment type="subcellular location">
    <subcellularLocation>
        <location evidence="3">Cytoplasm</location>
    </subcellularLocation>
</comment>
<keyword id="KW-0963">Cytoplasm</keyword>
<keyword id="KW-0597">Phosphoprotein</keyword>
<keyword id="KW-1185">Reference proteome</keyword>
<protein>
    <recommendedName>
        <fullName>BSD domain-containing protein C22A12.14c</fullName>
    </recommendedName>
</protein>
<organism>
    <name type="scientific">Schizosaccharomyces pombe (strain 972 / ATCC 24843)</name>
    <name type="common">Fission yeast</name>
    <dbReference type="NCBI Taxonomy" id="284812"/>
    <lineage>
        <taxon>Eukaryota</taxon>
        <taxon>Fungi</taxon>
        <taxon>Dikarya</taxon>
        <taxon>Ascomycota</taxon>
        <taxon>Taphrinomycotina</taxon>
        <taxon>Schizosaccharomycetes</taxon>
        <taxon>Schizosaccharomycetales</taxon>
        <taxon>Schizosaccharomycetaceae</taxon>
        <taxon>Schizosaccharomyces</taxon>
    </lineage>
</organism>
<feature type="chain" id="PRO_0000310330" description="BSD domain-containing protein C22A12.14c">
    <location>
        <begin position="1"/>
        <end position="347"/>
    </location>
</feature>
<feature type="domain" description="BSD" evidence="1">
    <location>
        <begin position="167"/>
        <end position="219"/>
    </location>
</feature>
<feature type="region of interest" description="Disordered" evidence="2">
    <location>
        <begin position="229"/>
        <end position="347"/>
    </location>
</feature>
<feature type="compositionally biased region" description="Acidic residues" evidence="2">
    <location>
        <begin position="240"/>
        <end position="251"/>
    </location>
</feature>
<feature type="compositionally biased region" description="Basic and acidic residues" evidence="2">
    <location>
        <begin position="297"/>
        <end position="312"/>
    </location>
</feature>
<feature type="compositionally biased region" description="Low complexity" evidence="2">
    <location>
        <begin position="313"/>
        <end position="325"/>
    </location>
</feature>
<feature type="compositionally biased region" description="Basic and acidic residues" evidence="2">
    <location>
        <begin position="327"/>
        <end position="337"/>
    </location>
</feature>
<feature type="compositionally biased region" description="Acidic residues" evidence="2">
    <location>
        <begin position="338"/>
        <end position="347"/>
    </location>
</feature>
<feature type="modified residue" description="Phosphothreonine" evidence="4">
    <location>
        <position position="123"/>
    </location>
</feature>
<feature type="modified residue" description="Phosphothreonine" evidence="4">
    <location>
        <position position="125"/>
    </location>
</feature>
<feature type="modified residue" description="Phosphoserine" evidence="4">
    <location>
        <position position="235"/>
    </location>
</feature>
<feature type="modified residue" description="Phosphoserine" evidence="4">
    <location>
        <position position="241"/>
    </location>
</feature>
<feature type="modified residue" description="Phosphoserine" evidence="4">
    <location>
        <position position="246"/>
    </location>
</feature>
<proteinExistence type="evidence at protein level"/>
<name>YF3E_SCHPO</name>
<gene>
    <name type="ORF">SPAC22A12.14c</name>
</gene>
<dbReference type="EMBL" id="CU329670">
    <property type="protein sequence ID" value="CAB16584.1"/>
    <property type="molecule type" value="Genomic_DNA"/>
</dbReference>
<dbReference type="PIR" id="T38154">
    <property type="entry name" value="T38154"/>
</dbReference>
<dbReference type="RefSeq" id="NP_593244.1">
    <property type="nucleotide sequence ID" value="NM_001018641.2"/>
</dbReference>
<dbReference type="BioGRID" id="278299">
    <property type="interactions" value="21"/>
</dbReference>
<dbReference type="FunCoup" id="O13905">
    <property type="interactions" value="318"/>
</dbReference>
<dbReference type="iPTMnet" id="O13905"/>
<dbReference type="PaxDb" id="4896-SPAC22A12.14c.1"/>
<dbReference type="EnsemblFungi" id="SPAC22A12.14c.1">
    <property type="protein sequence ID" value="SPAC22A12.14c.1:pep"/>
    <property type="gene ID" value="SPAC22A12.14c"/>
</dbReference>
<dbReference type="KEGG" id="spo:2541808"/>
<dbReference type="PomBase" id="SPAC22A12.14c"/>
<dbReference type="VEuPathDB" id="FungiDB:SPAC22A12.14c"/>
<dbReference type="eggNOG" id="KOG2690">
    <property type="taxonomic scope" value="Eukaryota"/>
</dbReference>
<dbReference type="HOGENOM" id="CLU_068730_0_0_1"/>
<dbReference type="InParanoid" id="O13905"/>
<dbReference type="OMA" id="MDLYDYM"/>
<dbReference type="PhylomeDB" id="O13905"/>
<dbReference type="PRO" id="PR:O13905"/>
<dbReference type="Proteomes" id="UP000002485">
    <property type="component" value="Chromosome I"/>
</dbReference>
<dbReference type="GO" id="GO:0005737">
    <property type="term" value="C:cytoplasm"/>
    <property type="evidence" value="ECO:0000318"/>
    <property type="project" value="GO_Central"/>
</dbReference>
<dbReference type="GO" id="GO:0005829">
    <property type="term" value="C:cytosol"/>
    <property type="evidence" value="ECO:0007005"/>
    <property type="project" value="PomBase"/>
</dbReference>
<dbReference type="Gene3D" id="1.10.3970.10">
    <property type="entry name" value="BSD domain"/>
    <property type="match status" value="1"/>
</dbReference>
<dbReference type="InterPro" id="IPR005607">
    <property type="entry name" value="BSD_dom"/>
</dbReference>
<dbReference type="InterPro" id="IPR035925">
    <property type="entry name" value="BSD_dom_sf"/>
</dbReference>
<dbReference type="InterPro" id="IPR051494">
    <property type="entry name" value="BSD_domain-containing"/>
</dbReference>
<dbReference type="PANTHER" id="PTHR16019:SF5">
    <property type="entry name" value="BSD DOMAIN-CONTAINING PROTEIN 1"/>
    <property type="match status" value="1"/>
</dbReference>
<dbReference type="PANTHER" id="PTHR16019">
    <property type="entry name" value="SYNAPSE-ASSOCIATED PROTEIN"/>
    <property type="match status" value="1"/>
</dbReference>
<dbReference type="Pfam" id="PF03909">
    <property type="entry name" value="BSD"/>
    <property type="match status" value="1"/>
</dbReference>
<dbReference type="SMART" id="SM00751">
    <property type="entry name" value="BSD"/>
    <property type="match status" value="1"/>
</dbReference>
<dbReference type="SUPFAM" id="SSF140383">
    <property type="entry name" value="BSD domain-like"/>
    <property type="match status" value="1"/>
</dbReference>
<dbReference type="PROSITE" id="PS50858">
    <property type="entry name" value="BSD"/>
    <property type="match status" value="1"/>
</dbReference>
<accession>O13905</accession>
<sequence length="347" mass="39397">MDLYDYMAPTTTTEEDDEEGYEKLKEEMGSALNNLTNGKFGLFWNSMKEKSENFLDDTKGKASSGMQQLKSQLEENIPVNSAMENLRKVEETAGSFWSGFGSTVNGFLDQALQISPKEDDVSTPTHEASSSVFLNRHERQLLELVQNENTFTQIISEPSHGITFESWEKEISIDGKTEEISLLLEEYPDLRKQMESLVPSEVSYDDFWKRFFWHKEVVQPIKAIQSGNDEEEIFSWGDERSDEEESDNEQVNDEKKQSSEEDTTENNSAAEVIDETVNDLESAVSKGLQIETQPASHDGEVDGEVKEEEENKVSSSSNIEASQSSLEVKDEANRKVDDDDEDDDDWE</sequence>
<evidence type="ECO:0000255" key="1">
    <source>
        <dbReference type="PROSITE-ProRule" id="PRU00036"/>
    </source>
</evidence>
<evidence type="ECO:0000256" key="2">
    <source>
        <dbReference type="SAM" id="MobiDB-lite"/>
    </source>
</evidence>
<evidence type="ECO:0000269" key="3">
    <source>
    </source>
</evidence>
<evidence type="ECO:0000269" key="4">
    <source>
    </source>
</evidence>